<name>EME1A_ARATH</name>
<proteinExistence type="evidence at protein level"/>
<comment type="function">
    <text evidence="3">Interacts with MUS81 to form a DNA structure-specific endonuclease with substrate preference for branched DNA structures with a 5'-end at the branch nick. Typical substrates include 3'-flap structures, D-loops, replication forks, nicked Holliday junctions and also intact Holliday junctions with a reduced efficiency. May be required in mitosis for the processing of stalled or collapsed replication fork intermediates. Plays a role in DNA repair and in genotoxic stress-induced homologous recombination (HR) in somatic cells. Mediates a subset of meiotic recombination events that are insensitive to crossover interference.</text>
</comment>
<comment type="cofactor">
    <cofactor evidence="5">
        <name>Mg(2+)</name>
        <dbReference type="ChEBI" id="CHEBI:18420"/>
    </cofactor>
    <cofactor evidence="5">
        <name>Ca(2+)</name>
        <dbReference type="ChEBI" id="CHEBI:29108"/>
    </cofactor>
</comment>
<comment type="subunit">
    <text>Forms a heterodimer with MUS81.</text>
</comment>
<comment type="subcellular location">
    <subcellularLocation>
        <location evidence="5">Nucleus</location>
    </subcellularLocation>
</comment>
<comment type="alternative products">
    <event type="alternative splicing"/>
    <isoform>
        <id>Q84M98-1</id>
        <name>1</name>
        <sequence type="displayed"/>
    </isoform>
    <isoform>
        <id>Q84M98-2</id>
        <name>2</name>
        <sequence type="described" ref="VSP_044051"/>
    </isoform>
</comment>
<comment type="similarity">
    <text evidence="5">Belongs to the EME1/MMS4 family.</text>
</comment>
<comment type="sequence caution" evidence="5">
    <conflict type="erroneous gene model prediction">
        <sequence resource="EMBL-CDS" id="AAD20399"/>
    </conflict>
</comment>
<keyword id="KW-0025">Alternative splicing</keyword>
<keyword id="KW-0106">Calcium</keyword>
<keyword id="KW-0131">Cell cycle</keyword>
<keyword id="KW-0132">Cell division</keyword>
<keyword id="KW-0175">Coiled coil</keyword>
<keyword id="KW-0227">DNA damage</keyword>
<keyword id="KW-0233">DNA recombination</keyword>
<keyword id="KW-0234">DNA repair</keyword>
<keyword id="KW-0255">Endonuclease</keyword>
<keyword id="KW-0378">Hydrolase</keyword>
<keyword id="KW-0460">Magnesium</keyword>
<keyword id="KW-0469">Meiosis</keyword>
<keyword id="KW-0479">Metal-binding</keyword>
<keyword id="KW-0498">Mitosis</keyword>
<keyword id="KW-0540">Nuclease</keyword>
<keyword id="KW-0539">Nucleus</keyword>
<keyword id="KW-1185">Reference proteome</keyword>
<feature type="chain" id="PRO_0000418427" description="Crossover junction endonuclease EME1A">
    <location>
        <begin position="1"/>
        <end position="546"/>
    </location>
</feature>
<feature type="domain" description="ERCC4">
    <location>
        <begin position="278"/>
        <end position="478"/>
    </location>
</feature>
<feature type="region of interest" description="Disordered" evidence="2">
    <location>
        <begin position="1"/>
        <end position="55"/>
    </location>
</feature>
<feature type="region of interest" description="Disordered" evidence="2">
    <location>
        <begin position="88"/>
        <end position="232"/>
    </location>
</feature>
<feature type="coiled-coil region" evidence="1">
    <location>
        <begin position="188"/>
        <end position="245"/>
    </location>
</feature>
<feature type="compositionally biased region" description="Polar residues" evidence="2">
    <location>
        <begin position="28"/>
        <end position="49"/>
    </location>
</feature>
<feature type="compositionally biased region" description="Basic and acidic residues" evidence="2">
    <location>
        <begin position="103"/>
        <end position="120"/>
    </location>
</feature>
<feature type="compositionally biased region" description="Basic and acidic residues" evidence="2">
    <location>
        <begin position="149"/>
        <end position="167"/>
    </location>
</feature>
<feature type="compositionally biased region" description="Polar residues" evidence="2">
    <location>
        <begin position="173"/>
        <end position="183"/>
    </location>
</feature>
<feature type="compositionally biased region" description="Basic and acidic residues" evidence="2">
    <location>
        <begin position="192"/>
        <end position="232"/>
    </location>
</feature>
<feature type="splice variant" id="VSP_044051" description="In isoform 2." evidence="4">
    <original>G</original>
    <variation>GVIT</variation>
    <location>
        <position position="259"/>
    </location>
</feature>
<accession>Q84M98</accession>
<accession>C5IHG3</accession>
<accession>Q9SJ19</accession>
<protein>
    <recommendedName>
        <fullName>Crossover junction endonuclease EME1A</fullName>
        <ecNumber>3.1.22.-</ecNumber>
    </recommendedName>
    <alternativeName>
        <fullName>Essential meiotic endonuclease 1A</fullName>
        <shortName>AtEME1A</shortName>
    </alternativeName>
</protein>
<gene>
    <name type="primary">EME1A</name>
    <name type="ordered locus">At2g21800</name>
    <name type="ORF">F7D8.12</name>
</gene>
<evidence type="ECO:0000255" key="1"/>
<evidence type="ECO:0000256" key="2">
    <source>
        <dbReference type="SAM" id="MobiDB-lite"/>
    </source>
</evidence>
<evidence type="ECO:0000269" key="3">
    <source>
    </source>
</evidence>
<evidence type="ECO:0000303" key="4">
    <source>
    </source>
</evidence>
<evidence type="ECO:0000305" key="5"/>
<reference key="1">
    <citation type="journal article" date="2009" name="Plant Physiol.">
        <title>Two distinct MUS81-EME1 complexes from Arabidopsis process Holliday junctions.</title>
        <authorList>
            <person name="Geuting V."/>
            <person name="Kobbe D."/>
            <person name="Hartung F."/>
            <person name="Duerr J."/>
            <person name="Focke M."/>
            <person name="Puchta H."/>
        </authorList>
    </citation>
    <scope>NUCLEOTIDE SEQUENCE [MRNA] (ISOFORM 2)</scope>
    <scope>FUNCTION</scope>
    <scope>INTERACTION WITH MUS81</scope>
    <source>
        <strain>cv. Columbia</strain>
    </source>
</reference>
<reference key="2">
    <citation type="journal article" date="1999" name="Nature">
        <title>Sequence and analysis of chromosome 2 of the plant Arabidopsis thaliana.</title>
        <authorList>
            <person name="Lin X."/>
            <person name="Kaul S."/>
            <person name="Rounsley S.D."/>
            <person name="Shea T.P."/>
            <person name="Benito M.-I."/>
            <person name="Town C.D."/>
            <person name="Fujii C.Y."/>
            <person name="Mason T.M."/>
            <person name="Bowman C.L."/>
            <person name="Barnstead M.E."/>
            <person name="Feldblyum T.V."/>
            <person name="Buell C.R."/>
            <person name="Ketchum K.A."/>
            <person name="Lee J.J."/>
            <person name="Ronning C.M."/>
            <person name="Koo H.L."/>
            <person name="Moffat K.S."/>
            <person name="Cronin L.A."/>
            <person name="Shen M."/>
            <person name="Pai G."/>
            <person name="Van Aken S."/>
            <person name="Umayam L."/>
            <person name="Tallon L.J."/>
            <person name="Gill J.E."/>
            <person name="Adams M.D."/>
            <person name="Carrera A.J."/>
            <person name="Creasy T.H."/>
            <person name="Goodman H.M."/>
            <person name="Somerville C.R."/>
            <person name="Copenhaver G.P."/>
            <person name="Preuss D."/>
            <person name="Nierman W.C."/>
            <person name="White O."/>
            <person name="Eisen J.A."/>
            <person name="Salzberg S.L."/>
            <person name="Fraser C.M."/>
            <person name="Venter J.C."/>
        </authorList>
    </citation>
    <scope>NUCLEOTIDE SEQUENCE [LARGE SCALE GENOMIC DNA]</scope>
    <source>
        <strain>cv. Columbia</strain>
    </source>
</reference>
<reference key="3">
    <citation type="journal article" date="2017" name="Plant J.">
        <title>Araport11: a complete reannotation of the Arabidopsis thaliana reference genome.</title>
        <authorList>
            <person name="Cheng C.Y."/>
            <person name="Krishnakumar V."/>
            <person name="Chan A.P."/>
            <person name="Thibaud-Nissen F."/>
            <person name="Schobel S."/>
            <person name="Town C.D."/>
        </authorList>
    </citation>
    <scope>GENOME REANNOTATION</scope>
    <source>
        <strain>cv. Columbia</strain>
    </source>
</reference>
<reference key="4">
    <citation type="journal article" date="2003" name="Science">
        <title>Empirical analysis of transcriptional activity in the Arabidopsis genome.</title>
        <authorList>
            <person name="Yamada K."/>
            <person name="Lim J."/>
            <person name="Dale J.M."/>
            <person name="Chen H."/>
            <person name="Shinn P."/>
            <person name="Palm C.J."/>
            <person name="Southwick A.M."/>
            <person name="Wu H.C."/>
            <person name="Kim C.J."/>
            <person name="Nguyen M."/>
            <person name="Pham P.K."/>
            <person name="Cheuk R.F."/>
            <person name="Karlin-Newmann G."/>
            <person name="Liu S.X."/>
            <person name="Lam B."/>
            <person name="Sakano H."/>
            <person name="Wu T."/>
            <person name="Yu G."/>
            <person name="Miranda M."/>
            <person name="Quach H.L."/>
            <person name="Tripp M."/>
            <person name="Chang C.H."/>
            <person name="Lee J.M."/>
            <person name="Toriumi M.J."/>
            <person name="Chan M.M."/>
            <person name="Tang C.C."/>
            <person name="Onodera C.S."/>
            <person name="Deng J.M."/>
            <person name="Akiyama K."/>
            <person name="Ansari Y."/>
            <person name="Arakawa T."/>
            <person name="Banh J."/>
            <person name="Banno F."/>
            <person name="Bowser L."/>
            <person name="Brooks S.Y."/>
            <person name="Carninci P."/>
            <person name="Chao Q."/>
            <person name="Choy N."/>
            <person name="Enju A."/>
            <person name="Goldsmith A.D."/>
            <person name="Gurjal M."/>
            <person name="Hansen N.F."/>
            <person name="Hayashizaki Y."/>
            <person name="Johnson-Hopson C."/>
            <person name="Hsuan V.W."/>
            <person name="Iida K."/>
            <person name="Karnes M."/>
            <person name="Khan S."/>
            <person name="Koesema E."/>
            <person name="Ishida J."/>
            <person name="Jiang P.X."/>
            <person name="Jones T."/>
            <person name="Kawai J."/>
            <person name="Kamiya A."/>
            <person name="Meyers C."/>
            <person name="Nakajima M."/>
            <person name="Narusaka M."/>
            <person name="Seki M."/>
            <person name="Sakurai T."/>
            <person name="Satou M."/>
            <person name="Tamse R."/>
            <person name="Vaysberg M."/>
            <person name="Wallender E.K."/>
            <person name="Wong C."/>
            <person name="Yamamura Y."/>
            <person name="Yuan S."/>
            <person name="Shinozaki K."/>
            <person name="Davis R.W."/>
            <person name="Theologis A."/>
            <person name="Ecker J.R."/>
        </authorList>
    </citation>
    <scope>NUCLEOTIDE SEQUENCE [LARGE SCALE MRNA] (ISOFORM 1)</scope>
    <source>
        <strain>cv. Columbia</strain>
    </source>
</reference>
<reference key="5">
    <citation type="submission" date="2006-07" db="EMBL/GenBank/DDBJ databases">
        <title>Large-scale analysis of RIKEN Arabidopsis full-length (RAFL) cDNAs.</title>
        <authorList>
            <person name="Totoki Y."/>
            <person name="Seki M."/>
            <person name="Ishida J."/>
            <person name="Nakajima M."/>
            <person name="Enju A."/>
            <person name="Kamiya A."/>
            <person name="Narusaka M."/>
            <person name="Shin-i T."/>
            <person name="Nakagawa M."/>
            <person name="Sakamoto N."/>
            <person name="Oishi K."/>
            <person name="Kohara Y."/>
            <person name="Kobayashi M."/>
            <person name="Toyoda A."/>
            <person name="Sakaki Y."/>
            <person name="Sakurai T."/>
            <person name="Iida K."/>
            <person name="Akiyama K."/>
            <person name="Satou M."/>
            <person name="Toyoda T."/>
            <person name="Konagaya A."/>
            <person name="Carninci P."/>
            <person name="Kawai J."/>
            <person name="Hayashizaki Y."/>
            <person name="Shinozaki K."/>
        </authorList>
    </citation>
    <scope>NUCLEOTIDE SEQUENCE [LARGE SCALE MRNA] (ISOFORM 1)</scope>
    <source>
        <strain>cv. Columbia</strain>
    </source>
</reference>
<dbReference type="EC" id="3.1.22.-"/>
<dbReference type="EMBL" id="FJ936556">
    <property type="protein sequence ID" value="ACR43775.1"/>
    <property type="molecule type" value="mRNA"/>
</dbReference>
<dbReference type="EMBL" id="AC007019">
    <property type="protein sequence ID" value="AAD20399.1"/>
    <property type="status" value="ALT_SEQ"/>
    <property type="molecule type" value="Genomic_DNA"/>
</dbReference>
<dbReference type="EMBL" id="CP002685">
    <property type="protein sequence ID" value="AEC07223.1"/>
    <property type="molecule type" value="Genomic_DNA"/>
</dbReference>
<dbReference type="EMBL" id="CP002685">
    <property type="protein sequence ID" value="AEC07224.1"/>
    <property type="molecule type" value="Genomic_DNA"/>
</dbReference>
<dbReference type="EMBL" id="BT006456">
    <property type="protein sequence ID" value="AAP21264.1"/>
    <property type="molecule type" value="mRNA"/>
</dbReference>
<dbReference type="EMBL" id="AK228007">
    <property type="protein sequence ID" value="BAE99972.1"/>
    <property type="molecule type" value="mRNA"/>
</dbReference>
<dbReference type="PIR" id="C84605">
    <property type="entry name" value="C84605"/>
</dbReference>
<dbReference type="RefSeq" id="NP_001189572.1">
    <molecule id="Q84M98-2"/>
    <property type="nucleotide sequence ID" value="NM_001202643.1"/>
</dbReference>
<dbReference type="RefSeq" id="NP_179771.2">
    <molecule id="Q84M98-1"/>
    <property type="nucleotide sequence ID" value="NM_127749.5"/>
</dbReference>
<dbReference type="SMR" id="Q84M98"/>
<dbReference type="FunCoup" id="Q84M98">
    <property type="interactions" value="215"/>
</dbReference>
<dbReference type="STRING" id="3702.Q84M98"/>
<dbReference type="iPTMnet" id="Q84M98"/>
<dbReference type="PaxDb" id="3702-AT2G21800.2"/>
<dbReference type="ProteomicsDB" id="220496">
    <molecule id="Q84M98-1"/>
</dbReference>
<dbReference type="EnsemblPlants" id="AT2G21800.1">
    <molecule id="Q84M98-1"/>
    <property type="protein sequence ID" value="AT2G21800.1"/>
    <property type="gene ID" value="AT2G21800"/>
</dbReference>
<dbReference type="EnsemblPlants" id="AT2G21800.2">
    <molecule id="Q84M98-2"/>
    <property type="protein sequence ID" value="AT2G21800.2"/>
    <property type="gene ID" value="AT2G21800"/>
</dbReference>
<dbReference type="GeneID" id="816716"/>
<dbReference type="Gramene" id="AT2G21800.1">
    <molecule id="Q84M98-1"/>
    <property type="protein sequence ID" value="AT2G21800.1"/>
    <property type="gene ID" value="AT2G21800"/>
</dbReference>
<dbReference type="Gramene" id="AT2G21800.2">
    <molecule id="Q84M98-2"/>
    <property type="protein sequence ID" value="AT2G21800.2"/>
    <property type="gene ID" value="AT2G21800"/>
</dbReference>
<dbReference type="KEGG" id="ath:AT2G21800"/>
<dbReference type="Araport" id="AT2G21800"/>
<dbReference type="TAIR" id="AT2G21800">
    <property type="gene designation" value="EME1A"/>
</dbReference>
<dbReference type="eggNOG" id="ENOG502SDU4">
    <property type="taxonomic scope" value="Eukaryota"/>
</dbReference>
<dbReference type="InParanoid" id="Q84M98"/>
<dbReference type="PhylomeDB" id="Q84M98"/>
<dbReference type="PRO" id="PR:Q84M98"/>
<dbReference type="Proteomes" id="UP000006548">
    <property type="component" value="Chromosome 2"/>
</dbReference>
<dbReference type="ExpressionAtlas" id="Q84M98">
    <property type="expression patterns" value="baseline and differential"/>
</dbReference>
<dbReference type="GO" id="GO:0048476">
    <property type="term" value="C:Holliday junction resolvase complex"/>
    <property type="evidence" value="ECO:0007669"/>
    <property type="project" value="InterPro"/>
</dbReference>
<dbReference type="GO" id="GO:0005634">
    <property type="term" value="C:nucleus"/>
    <property type="evidence" value="ECO:0007669"/>
    <property type="project" value="UniProtKB-SubCell"/>
</dbReference>
<dbReference type="GO" id="GO:0003677">
    <property type="term" value="F:DNA binding"/>
    <property type="evidence" value="ECO:0007669"/>
    <property type="project" value="InterPro"/>
</dbReference>
<dbReference type="GO" id="GO:0004519">
    <property type="term" value="F:endonuclease activity"/>
    <property type="evidence" value="ECO:0000314"/>
    <property type="project" value="TAIR"/>
</dbReference>
<dbReference type="GO" id="GO:0046872">
    <property type="term" value="F:metal ion binding"/>
    <property type="evidence" value="ECO:0007669"/>
    <property type="project" value="UniProtKB-KW"/>
</dbReference>
<dbReference type="GO" id="GO:0051301">
    <property type="term" value="P:cell division"/>
    <property type="evidence" value="ECO:0007669"/>
    <property type="project" value="UniProtKB-KW"/>
</dbReference>
<dbReference type="GO" id="GO:0006310">
    <property type="term" value="P:DNA recombination"/>
    <property type="evidence" value="ECO:0000314"/>
    <property type="project" value="TAIR"/>
</dbReference>
<dbReference type="GO" id="GO:0006281">
    <property type="term" value="P:DNA repair"/>
    <property type="evidence" value="ECO:0000314"/>
    <property type="project" value="TAIR"/>
</dbReference>
<dbReference type="GO" id="GO:0051321">
    <property type="term" value="P:meiotic cell cycle"/>
    <property type="evidence" value="ECO:0007669"/>
    <property type="project" value="UniProtKB-KW"/>
</dbReference>
<dbReference type="CDD" id="cd20083">
    <property type="entry name" value="XPF_nuclease_EME"/>
    <property type="match status" value="1"/>
</dbReference>
<dbReference type="FunFam" id="1.10.150.670:FF:000007">
    <property type="entry name" value="Crossover junction endonuclease EME1B"/>
    <property type="match status" value="1"/>
</dbReference>
<dbReference type="Gene3D" id="3.40.50.10130">
    <property type="match status" value="1"/>
</dbReference>
<dbReference type="Gene3D" id="1.10.150.670">
    <property type="entry name" value="Crossover junction endonuclease EME1, DNA-binding domain"/>
    <property type="match status" value="1"/>
</dbReference>
<dbReference type="InterPro" id="IPR042530">
    <property type="entry name" value="EME1/EME2_C"/>
</dbReference>
<dbReference type="InterPro" id="IPR006166">
    <property type="entry name" value="ERCC4_domain"/>
</dbReference>
<dbReference type="InterPro" id="IPR033310">
    <property type="entry name" value="Mms4/EME1/EME2"/>
</dbReference>
<dbReference type="InterPro" id="IPR047524">
    <property type="entry name" value="XPF_nuclease_EME1_plant/arthr"/>
</dbReference>
<dbReference type="PANTHER" id="PTHR21077:SF5">
    <property type="entry name" value="CROSSOVER JUNCTION ENDONUCLEASE MMS4"/>
    <property type="match status" value="1"/>
</dbReference>
<dbReference type="PANTHER" id="PTHR21077">
    <property type="entry name" value="EME1 PROTEIN"/>
    <property type="match status" value="1"/>
</dbReference>
<dbReference type="Pfam" id="PF21292">
    <property type="entry name" value="EME1-MUS81_C"/>
    <property type="match status" value="1"/>
</dbReference>
<dbReference type="Pfam" id="PF02732">
    <property type="entry name" value="ERCC4"/>
    <property type="match status" value="1"/>
</dbReference>
<dbReference type="SMART" id="SM00891">
    <property type="entry name" value="ERCC4"/>
    <property type="match status" value="1"/>
</dbReference>
<sequence length="546" mass="61239">MSDFILISDGEDEATPPPSKRARKNRTPTDLNLDTEPSLQKQPPGSASTPFFLDETPLSDDVTVLKSSFGSGTGASSGRENNFFGKRVISLESDSEDSPGPESSKKYEPVYTDSWKKPCRLEFGSSDANSDDDPSWMRRASFQSSLSKDAIEVDSDHEKEDTGVEKMGRKKQTITSKSTSLSADSLPKKKMSKDEKTRAAEEKKLQKEQEKLQKAASKAEDAEHKKLEREKQKWAKEKDKALKCIVAWIDNKVLEGSFGGLLISGLKEKCITYHVTTNPIQRSIVWTMTLPEDIAQSLPLGSKIPYVLLLYEAEDFCNLVAKKELLENVYRVRDEYPSYTMCYLTNKLLSYVNKKERVEYKDPVNGCGWRKPPIDEAIAKLSTHYIGVHSRHCVDEAEVADHVVRLTSSLAHCQVRKKLTRLSVYADGTLMSKNAADKHLIRESIWLKVLVAIPKVQPRYAIAVSKKYPSLKSLLKVYMDPNISVHEKEFLLKDLKVENLVGRDTSVGEACSKRIYRVLMSLDGTIKTDDVENGAASFTLPPSDLI</sequence>
<organism>
    <name type="scientific">Arabidopsis thaliana</name>
    <name type="common">Mouse-ear cress</name>
    <dbReference type="NCBI Taxonomy" id="3702"/>
    <lineage>
        <taxon>Eukaryota</taxon>
        <taxon>Viridiplantae</taxon>
        <taxon>Streptophyta</taxon>
        <taxon>Embryophyta</taxon>
        <taxon>Tracheophyta</taxon>
        <taxon>Spermatophyta</taxon>
        <taxon>Magnoliopsida</taxon>
        <taxon>eudicotyledons</taxon>
        <taxon>Gunneridae</taxon>
        <taxon>Pentapetalae</taxon>
        <taxon>rosids</taxon>
        <taxon>malvids</taxon>
        <taxon>Brassicales</taxon>
        <taxon>Brassicaceae</taxon>
        <taxon>Camelineae</taxon>
        <taxon>Arabidopsis</taxon>
    </lineage>
</organism>